<organism>
    <name type="scientific">Saccharomyces cerevisiae (strain ATCC 204508 / S288c)</name>
    <name type="common">Baker's yeast</name>
    <dbReference type="NCBI Taxonomy" id="559292"/>
    <lineage>
        <taxon>Eukaryota</taxon>
        <taxon>Fungi</taxon>
        <taxon>Dikarya</taxon>
        <taxon>Ascomycota</taxon>
        <taxon>Saccharomycotina</taxon>
        <taxon>Saccharomycetes</taxon>
        <taxon>Saccharomycetales</taxon>
        <taxon>Saccharomycetaceae</taxon>
        <taxon>Saccharomyces</taxon>
    </lineage>
</organism>
<protein>
    <recommendedName>
        <fullName>Protein kinase C-like 1</fullName>
        <shortName>PKC 1</shortName>
        <ecNumber>2.7.11.13</ecNumber>
    </recommendedName>
</protein>
<feature type="chain" id="PRO_0000055738" description="Protein kinase C-like 1">
    <location>
        <begin position="1"/>
        <end position="1151"/>
    </location>
</feature>
<feature type="domain" description="REM-1 1" evidence="5">
    <location>
        <begin position="1"/>
        <end position="67"/>
    </location>
</feature>
<feature type="domain" description="REM-1 2" evidence="5">
    <location>
        <begin position="106"/>
        <end position="183"/>
    </location>
</feature>
<feature type="domain" description="C2" evidence="1">
    <location>
        <begin position="190"/>
        <end position="309"/>
    </location>
</feature>
<feature type="domain" description="Protein kinase" evidence="2">
    <location>
        <begin position="824"/>
        <end position="1083"/>
    </location>
</feature>
<feature type="domain" description="AGC-kinase C-terminal" evidence="4">
    <location>
        <begin position="1084"/>
        <end position="1151"/>
    </location>
</feature>
<feature type="zinc finger region" description="Phorbol-ester/DAG-type 1" evidence="3">
    <location>
        <begin position="414"/>
        <end position="461"/>
    </location>
</feature>
<feature type="zinc finger region" description="Phorbol-ester/DAG-type 2" evidence="3">
    <location>
        <begin position="481"/>
        <end position="531"/>
    </location>
</feature>
<feature type="region of interest" description="Disordered" evidence="7">
    <location>
        <begin position="64"/>
        <end position="88"/>
    </location>
</feature>
<feature type="region of interest" description="Disordered" evidence="7">
    <location>
        <begin position="306"/>
        <end position="331"/>
    </location>
</feature>
<feature type="region of interest" description="Disordered" evidence="7">
    <location>
        <begin position="546"/>
        <end position="620"/>
    </location>
</feature>
<feature type="region of interest" description="Disordered" evidence="7">
    <location>
        <begin position="649"/>
        <end position="669"/>
    </location>
</feature>
<feature type="region of interest" description="Disordered" evidence="7">
    <location>
        <begin position="782"/>
        <end position="816"/>
    </location>
</feature>
<feature type="compositionally biased region" description="Polar residues" evidence="7">
    <location>
        <begin position="560"/>
        <end position="577"/>
    </location>
</feature>
<feature type="compositionally biased region" description="Basic and acidic residues" evidence="7">
    <location>
        <begin position="605"/>
        <end position="620"/>
    </location>
</feature>
<feature type="compositionally biased region" description="Low complexity" evidence="7">
    <location>
        <begin position="792"/>
        <end position="806"/>
    </location>
</feature>
<feature type="compositionally biased region" description="Basic residues" evidence="7">
    <location>
        <begin position="807"/>
        <end position="816"/>
    </location>
</feature>
<feature type="active site" description="Proton acceptor" evidence="2 6">
    <location>
        <position position="949"/>
    </location>
</feature>
<feature type="binding site" evidence="2">
    <location>
        <begin position="830"/>
        <end position="838"/>
    </location>
    <ligand>
        <name>ATP</name>
        <dbReference type="ChEBI" id="CHEBI:30616"/>
    </ligand>
</feature>
<feature type="binding site" evidence="2">
    <location>
        <position position="853"/>
    </location>
    <ligand>
        <name>ATP</name>
        <dbReference type="ChEBI" id="CHEBI:30616"/>
    </ligand>
</feature>
<feature type="modified residue" description="Phosphoserine" evidence="9">
    <location>
        <position position="226"/>
    </location>
</feature>
<feature type="modified residue" description="Phosphoserine" evidence="9">
    <location>
        <position position="761"/>
    </location>
</feature>
<feature type="sequence variant" description="In cly5; temperature-sensitive mutation that cause cell lysis at high temperature.">
    <original>T</original>
    <variation>I</variation>
    <location>
        <position position="958"/>
    </location>
</feature>
<feature type="sequence variant" description="In cly7; temperature-sensitive mutation that cause cell lysis at high temperature.">
    <original>P</original>
    <variation>S</variation>
    <location>
        <position position="1023"/>
    </location>
</feature>
<feature type="sequence conflict" description="In Ref. 2; CAA55990 and 3; CAA84932." evidence="8" ref="2 3">
    <original>C</original>
    <variation>F</variation>
    <location>
        <position position="81"/>
    </location>
</feature>
<feature type="sequence conflict" description="In Ref. 1; AAA34878." evidence="8" ref="1">
    <original>T</original>
    <variation>S</variation>
    <location>
        <position position="244"/>
    </location>
</feature>
<feature type="sequence conflict" description="In Ref. 1; AAA34878." evidence="8" ref="1">
    <original>G</original>
    <variation>E</variation>
    <location>
        <position position="606"/>
    </location>
</feature>
<feature type="sequence conflict" description="In Ref. 1; AAA34878, 2; CAA55990 and 3; CAA84932." evidence="8" ref="1 2 3">
    <original>R</original>
    <variation>K</variation>
    <location>
        <position position="621"/>
    </location>
</feature>
<feature type="sequence conflict" description="In Ref. 1; AAA34878." evidence="8" ref="1">
    <original>S</original>
    <variation>P</variation>
    <location>
        <position position="623"/>
    </location>
</feature>
<feature type="sequence conflict" description="In Ref. 2; CAA55990 and 3; CAA84932." evidence="8" ref="2 3">
    <original>A</original>
    <variation>P</variation>
    <location>
        <position position="789"/>
    </location>
</feature>
<accession>P24583</accession>
<accession>D6VPP8</accession>
<dbReference type="EC" id="2.7.11.13"/>
<dbReference type="EMBL" id="M32491">
    <property type="protein sequence ID" value="AAA34878.1"/>
    <property type="molecule type" value="mRNA"/>
</dbReference>
<dbReference type="EMBL" id="X79489">
    <property type="protein sequence ID" value="CAA55990.1"/>
    <property type="molecule type" value="Genomic_DNA"/>
</dbReference>
<dbReference type="EMBL" id="Z35866">
    <property type="protein sequence ID" value="CAA84932.1"/>
    <property type="molecule type" value="Genomic_DNA"/>
</dbReference>
<dbReference type="EMBL" id="BK006936">
    <property type="protein sequence ID" value="DAA07018.2"/>
    <property type="molecule type" value="Genomic_DNA"/>
</dbReference>
<dbReference type="PIR" id="S45390">
    <property type="entry name" value="S45390"/>
</dbReference>
<dbReference type="RefSeq" id="NP_009445.2">
    <property type="nucleotide sequence ID" value="NM_001178345.2"/>
</dbReference>
<dbReference type="SMR" id="P24583"/>
<dbReference type="BioGRID" id="32598">
    <property type="interactions" value="1115"/>
</dbReference>
<dbReference type="DIP" id="DIP-1516N"/>
<dbReference type="FunCoup" id="P24583">
    <property type="interactions" value="591"/>
</dbReference>
<dbReference type="IntAct" id="P24583">
    <property type="interactions" value="19"/>
</dbReference>
<dbReference type="MINT" id="P24583"/>
<dbReference type="STRING" id="4932.YBL105C"/>
<dbReference type="CarbonylDB" id="P24583"/>
<dbReference type="iPTMnet" id="P24583"/>
<dbReference type="PaxDb" id="4932-YBL105C"/>
<dbReference type="PeptideAtlas" id="P24583"/>
<dbReference type="EnsemblFungi" id="YBL105C_mRNA">
    <property type="protein sequence ID" value="YBL105C"/>
    <property type="gene ID" value="YBL105C"/>
</dbReference>
<dbReference type="GeneID" id="852169"/>
<dbReference type="KEGG" id="sce:YBL105C"/>
<dbReference type="AGR" id="SGD:S000000201"/>
<dbReference type="SGD" id="S000000201">
    <property type="gene designation" value="PKC1"/>
</dbReference>
<dbReference type="VEuPathDB" id="FungiDB:YBL105C"/>
<dbReference type="eggNOG" id="KOG0694">
    <property type="taxonomic scope" value="Eukaryota"/>
</dbReference>
<dbReference type="GeneTree" id="ENSGT00940000168328"/>
<dbReference type="HOGENOM" id="CLU_000288_54_1_1"/>
<dbReference type="InParanoid" id="P24583"/>
<dbReference type="OMA" id="QCTHLVP"/>
<dbReference type="OrthoDB" id="63267at2759"/>
<dbReference type="BioCyc" id="YEAST:G3O-28989-MONOMER"/>
<dbReference type="BRENDA" id="2.7.11.13">
    <property type="organism ID" value="984"/>
</dbReference>
<dbReference type="Reactome" id="R-SCE-114508">
    <property type="pathway name" value="Effects of PIP2 hydrolysis"/>
</dbReference>
<dbReference type="Reactome" id="R-SCE-114516">
    <property type="pathway name" value="Disinhibition of SNARE formation"/>
</dbReference>
<dbReference type="Reactome" id="R-SCE-1169091">
    <property type="pathway name" value="Activation of NF-kappaB in B cells"/>
</dbReference>
<dbReference type="Reactome" id="R-SCE-1489509">
    <property type="pathway name" value="DAG and IP3 signaling"/>
</dbReference>
<dbReference type="Reactome" id="R-SCE-202424">
    <property type="pathway name" value="Downstream TCR signaling"/>
</dbReference>
<dbReference type="Reactome" id="R-SCE-2029485">
    <property type="pathway name" value="Role of phospholipids in phagocytosis"/>
</dbReference>
<dbReference type="Reactome" id="R-SCE-2179392">
    <property type="pathway name" value="EGFR Transactivation by Gastrin"/>
</dbReference>
<dbReference type="Reactome" id="R-SCE-2871837">
    <property type="pathway name" value="FCERI mediated NF-kB activation"/>
</dbReference>
<dbReference type="Reactome" id="R-SCE-399997">
    <property type="pathway name" value="Acetylcholine regulates insulin secretion"/>
</dbReference>
<dbReference type="Reactome" id="R-SCE-4419969">
    <property type="pathway name" value="Depolymerization of the Nuclear Lamina"/>
</dbReference>
<dbReference type="Reactome" id="R-SCE-5218921">
    <property type="pathway name" value="VEGFR2 mediated cell proliferation"/>
</dbReference>
<dbReference type="Reactome" id="R-SCE-5607764">
    <property type="pathway name" value="CLEC7A (Dectin-1) signaling"/>
</dbReference>
<dbReference type="Reactome" id="R-SCE-5625740">
    <property type="pathway name" value="RHO GTPases activate PKNs"/>
</dbReference>
<dbReference type="Reactome" id="R-SCE-5625886">
    <property type="pathway name" value="Activated PKN1 stimulates transcription of AR (androgen receptor) regulated genes KLK2 and KLK3"/>
</dbReference>
<dbReference type="Reactome" id="R-SCE-5668599">
    <property type="pathway name" value="RHO GTPases Activate NADPH Oxidases"/>
</dbReference>
<dbReference type="Reactome" id="R-SCE-6798695">
    <property type="pathway name" value="Neutrophil degranulation"/>
</dbReference>
<dbReference type="Reactome" id="R-SCE-76005">
    <property type="pathway name" value="Response to elevated platelet cytosolic Ca2+"/>
</dbReference>
<dbReference type="Reactome" id="R-SCE-8980692">
    <property type="pathway name" value="RHOA GTPase cycle"/>
</dbReference>
<dbReference type="Reactome" id="R-SCE-9013026">
    <property type="pathway name" value="RHOB GTPase cycle"/>
</dbReference>
<dbReference type="Reactome" id="R-SCE-9013106">
    <property type="pathway name" value="RHOC GTPase cycle"/>
</dbReference>
<dbReference type="Reactome" id="R-SCE-9634635">
    <property type="pathway name" value="Estrogen-stimulated signaling through PRKCZ"/>
</dbReference>
<dbReference type="Reactome" id="R-SCE-9856530">
    <property type="pathway name" value="High laminar flow shear stress activates signaling by PIEZO1 and PECAM1:CDH5:KDR in endothelial cells"/>
</dbReference>
<dbReference type="SABIO-RK" id="P24583"/>
<dbReference type="BioGRID-ORCS" id="852169">
    <property type="hits" value="3 hits in 13 CRISPR screens"/>
</dbReference>
<dbReference type="PRO" id="PR:P24583"/>
<dbReference type="Proteomes" id="UP000002311">
    <property type="component" value="Chromosome II"/>
</dbReference>
<dbReference type="RNAct" id="P24583">
    <property type="molecule type" value="protein"/>
</dbReference>
<dbReference type="GO" id="GO:0005935">
    <property type="term" value="C:cellular bud neck"/>
    <property type="evidence" value="ECO:0007005"/>
    <property type="project" value="SGD"/>
</dbReference>
<dbReference type="GO" id="GO:0005737">
    <property type="term" value="C:cytoplasm"/>
    <property type="evidence" value="ECO:0000314"/>
    <property type="project" value="SGD"/>
</dbReference>
<dbReference type="GO" id="GO:0010494">
    <property type="term" value="C:cytoplasmic stress granule"/>
    <property type="evidence" value="ECO:0000314"/>
    <property type="project" value="SGD"/>
</dbReference>
<dbReference type="GO" id="GO:0005856">
    <property type="term" value="C:cytoskeleton"/>
    <property type="evidence" value="ECO:0000314"/>
    <property type="project" value="SGD"/>
</dbReference>
<dbReference type="GO" id="GO:0005634">
    <property type="term" value="C:nucleus"/>
    <property type="evidence" value="ECO:0000314"/>
    <property type="project" value="SGD"/>
</dbReference>
<dbReference type="GO" id="GO:0005886">
    <property type="term" value="C:plasma membrane"/>
    <property type="evidence" value="ECO:0007005"/>
    <property type="project" value="SGD"/>
</dbReference>
<dbReference type="GO" id="GO:0032165">
    <property type="term" value="C:prospore septin filament array"/>
    <property type="evidence" value="ECO:0007005"/>
    <property type="project" value="SGD"/>
</dbReference>
<dbReference type="GO" id="GO:0030427">
    <property type="term" value="C:site of polarized growth"/>
    <property type="evidence" value="ECO:0000314"/>
    <property type="project" value="SGD"/>
</dbReference>
<dbReference type="GO" id="GO:0005524">
    <property type="term" value="F:ATP binding"/>
    <property type="evidence" value="ECO:0007669"/>
    <property type="project" value="UniProtKB-KW"/>
</dbReference>
<dbReference type="GO" id="GO:0004697">
    <property type="term" value="F:diacylglycerol-dependent serine/threonine kinase activity"/>
    <property type="evidence" value="ECO:0000314"/>
    <property type="project" value="SGD"/>
</dbReference>
<dbReference type="GO" id="GO:0106310">
    <property type="term" value="F:protein serine kinase activity"/>
    <property type="evidence" value="ECO:0007669"/>
    <property type="project" value="RHEA"/>
</dbReference>
<dbReference type="GO" id="GO:0004674">
    <property type="term" value="F:protein serine/threonine kinase activity"/>
    <property type="evidence" value="ECO:0000318"/>
    <property type="project" value="GO_Central"/>
</dbReference>
<dbReference type="GO" id="GO:0008270">
    <property type="term" value="F:zinc ion binding"/>
    <property type="evidence" value="ECO:0007669"/>
    <property type="project" value="UniProtKB-KW"/>
</dbReference>
<dbReference type="GO" id="GO:0032186">
    <property type="term" value="P:cellular bud neck septin ring organization"/>
    <property type="evidence" value="ECO:0000315"/>
    <property type="project" value="SGD"/>
</dbReference>
<dbReference type="GO" id="GO:0009267">
    <property type="term" value="P:cellular response to starvation"/>
    <property type="evidence" value="ECO:0000314"/>
    <property type="project" value="SGD"/>
</dbReference>
<dbReference type="GO" id="GO:0009272">
    <property type="term" value="P:fungal-type cell wall biogenesis"/>
    <property type="evidence" value="ECO:0007669"/>
    <property type="project" value="InterPro"/>
</dbReference>
<dbReference type="GO" id="GO:0035556">
    <property type="term" value="P:intracellular signal transduction"/>
    <property type="evidence" value="ECO:0000315"/>
    <property type="project" value="SGD"/>
</dbReference>
<dbReference type="GO" id="GO:0000425">
    <property type="term" value="P:pexophagy"/>
    <property type="evidence" value="ECO:0000315"/>
    <property type="project" value="SGD"/>
</dbReference>
<dbReference type="GO" id="GO:0010606">
    <property type="term" value="P:positive regulation of cytoplasmic mRNA processing body assembly"/>
    <property type="evidence" value="ECO:0000315"/>
    <property type="project" value="SGD"/>
</dbReference>
<dbReference type="GO" id="GO:0060237">
    <property type="term" value="P:regulation of fungal-type cell wall organization"/>
    <property type="evidence" value="ECO:0000315"/>
    <property type="project" value="SGD"/>
</dbReference>
<dbReference type="GO" id="GO:0060211">
    <property type="term" value="P:regulation of nuclear-transcribed mRNA poly(A) tail shortening"/>
    <property type="evidence" value="ECO:0000315"/>
    <property type="project" value="SGD"/>
</dbReference>
<dbReference type="GO" id="GO:0007165">
    <property type="term" value="P:signal transduction"/>
    <property type="evidence" value="ECO:0000315"/>
    <property type="project" value="SGD"/>
</dbReference>
<dbReference type="GO" id="GO:0034063">
    <property type="term" value="P:stress granule assembly"/>
    <property type="evidence" value="ECO:0000314"/>
    <property type="project" value="SGD"/>
</dbReference>
<dbReference type="CDD" id="cd20822">
    <property type="entry name" value="C1_ScPKC1-like_rpt1"/>
    <property type="match status" value="1"/>
</dbReference>
<dbReference type="CDD" id="cd20823">
    <property type="entry name" value="C1_ScPKC1-like_rpt2"/>
    <property type="match status" value="1"/>
</dbReference>
<dbReference type="CDD" id="cd08689">
    <property type="entry name" value="C2_fungal_Pkc1p"/>
    <property type="match status" value="1"/>
</dbReference>
<dbReference type="CDD" id="cd11621">
    <property type="entry name" value="HR1_PKC-like_1_fungi"/>
    <property type="match status" value="1"/>
</dbReference>
<dbReference type="CDD" id="cd11620">
    <property type="entry name" value="HR1_PKC-like_2_fungi"/>
    <property type="match status" value="1"/>
</dbReference>
<dbReference type="CDD" id="cd05570">
    <property type="entry name" value="STKc_PKC"/>
    <property type="match status" value="1"/>
</dbReference>
<dbReference type="FunFam" id="1.10.510.10:FF:000101">
    <property type="entry name" value="Protein kinase C"/>
    <property type="match status" value="1"/>
</dbReference>
<dbReference type="FunFam" id="3.30.200.20:FF:000103">
    <property type="entry name" value="Protein kinase C"/>
    <property type="match status" value="1"/>
</dbReference>
<dbReference type="FunFam" id="3.30.60.20:FF:000014">
    <property type="entry name" value="Protein kinase C"/>
    <property type="match status" value="1"/>
</dbReference>
<dbReference type="FunFam" id="3.30.60.20:FF:000034">
    <property type="entry name" value="Protein kinase C"/>
    <property type="match status" value="1"/>
</dbReference>
<dbReference type="Gene3D" id="3.30.60.20">
    <property type="match status" value="2"/>
</dbReference>
<dbReference type="Gene3D" id="2.60.40.150">
    <property type="entry name" value="C2 domain"/>
    <property type="match status" value="1"/>
</dbReference>
<dbReference type="Gene3D" id="3.30.200.20">
    <property type="entry name" value="Phosphorylase Kinase, domain 1"/>
    <property type="match status" value="1"/>
</dbReference>
<dbReference type="Gene3D" id="1.10.510.10">
    <property type="entry name" value="Transferase(Phosphotransferase) domain 1"/>
    <property type="match status" value="1"/>
</dbReference>
<dbReference type="InterPro" id="IPR000961">
    <property type="entry name" value="AGC-kinase_C"/>
</dbReference>
<dbReference type="InterPro" id="IPR046349">
    <property type="entry name" value="C1-like_sf"/>
</dbReference>
<dbReference type="InterPro" id="IPR000008">
    <property type="entry name" value="C2_dom"/>
</dbReference>
<dbReference type="InterPro" id="IPR035892">
    <property type="entry name" value="C2_domain_sf"/>
</dbReference>
<dbReference type="InterPro" id="IPR037778">
    <property type="entry name" value="C2_fungal_PKC"/>
</dbReference>
<dbReference type="InterPro" id="IPR011072">
    <property type="entry name" value="HR1_rho-bd"/>
</dbReference>
<dbReference type="InterPro" id="IPR036274">
    <property type="entry name" value="HR1_rpt_sf"/>
</dbReference>
<dbReference type="InterPro" id="IPR011009">
    <property type="entry name" value="Kinase-like_dom_sf"/>
</dbReference>
<dbReference type="InterPro" id="IPR002219">
    <property type="entry name" value="PE/DAG-bd"/>
</dbReference>
<dbReference type="InterPro" id="IPR037312">
    <property type="entry name" value="PKC-like_HR1"/>
</dbReference>
<dbReference type="InterPro" id="IPR017892">
    <property type="entry name" value="Pkinase_C"/>
</dbReference>
<dbReference type="InterPro" id="IPR000719">
    <property type="entry name" value="Prot_kinase_dom"/>
</dbReference>
<dbReference type="InterPro" id="IPR017441">
    <property type="entry name" value="Protein_kinase_ATP_BS"/>
</dbReference>
<dbReference type="InterPro" id="IPR008271">
    <property type="entry name" value="Ser/Thr_kinase_AS"/>
</dbReference>
<dbReference type="PANTHER" id="PTHR24351">
    <property type="entry name" value="RIBOSOMAL PROTEIN S6 KINASE"/>
    <property type="match status" value="1"/>
</dbReference>
<dbReference type="Pfam" id="PF00130">
    <property type="entry name" value="C1_1"/>
    <property type="match status" value="2"/>
</dbReference>
<dbReference type="Pfam" id="PF00168">
    <property type="entry name" value="C2"/>
    <property type="match status" value="1"/>
</dbReference>
<dbReference type="Pfam" id="PF02185">
    <property type="entry name" value="HR1"/>
    <property type="match status" value="2"/>
</dbReference>
<dbReference type="Pfam" id="PF00069">
    <property type="entry name" value="Pkinase"/>
    <property type="match status" value="1"/>
</dbReference>
<dbReference type="Pfam" id="PF00433">
    <property type="entry name" value="Pkinase_C"/>
    <property type="match status" value="1"/>
</dbReference>
<dbReference type="SMART" id="SM00109">
    <property type="entry name" value="C1"/>
    <property type="match status" value="2"/>
</dbReference>
<dbReference type="SMART" id="SM00239">
    <property type="entry name" value="C2"/>
    <property type="match status" value="1"/>
</dbReference>
<dbReference type="SMART" id="SM00742">
    <property type="entry name" value="Hr1"/>
    <property type="match status" value="2"/>
</dbReference>
<dbReference type="SMART" id="SM00133">
    <property type="entry name" value="S_TK_X"/>
    <property type="match status" value="1"/>
</dbReference>
<dbReference type="SMART" id="SM00220">
    <property type="entry name" value="S_TKc"/>
    <property type="match status" value="1"/>
</dbReference>
<dbReference type="SUPFAM" id="SSF49562">
    <property type="entry name" value="C2 domain (Calcium/lipid-binding domain, CaLB)"/>
    <property type="match status" value="1"/>
</dbReference>
<dbReference type="SUPFAM" id="SSF57889">
    <property type="entry name" value="Cysteine-rich domain"/>
    <property type="match status" value="2"/>
</dbReference>
<dbReference type="SUPFAM" id="SSF46585">
    <property type="entry name" value="HR1 repeat"/>
    <property type="match status" value="1"/>
</dbReference>
<dbReference type="SUPFAM" id="SSF56112">
    <property type="entry name" value="Protein kinase-like (PK-like)"/>
    <property type="match status" value="1"/>
</dbReference>
<dbReference type="PROSITE" id="PS51285">
    <property type="entry name" value="AGC_KINASE_CTER"/>
    <property type="match status" value="1"/>
</dbReference>
<dbReference type="PROSITE" id="PS50004">
    <property type="entry name" value="C2"/>
    <property type="match status" value="1"/>
</dbReference>
<dbReference type="PROSITE" id="PS00107">
    <property type="entry name" value="PROTEIN_KINASE_ATP"/>
    <property type="match status" value="1"/>
</dbReference>
<dbReference type="PROSITE" id="PS50011">
    <property type="entry name" value="PROTEIN_KINASE_DOM"/>
    <property type="match status" value="1"/>
</dbReference>
<dbReference type="PROSITE" id="PS00108">
    <property type="entry name" value="PROTEIN_KINASE_ST"/>
    <property type="match status" value="1"/>
</dbReference>
<dbReference type="PROSITE" id="PS51860">
    <property type="entry name" value="REM_1"/>
    <property type="match status" value="2"/>
</dbReference>
<dbReference type="PROSITE" id="PS00479">
    <property type="entry name" value="ZF_DAG_PE_1"/>
    <property type="match status" value="2"/>
</dbReference>
<dbReference type="PROSITE" id="PS50081">
    <property type="entry name" value="ZF_DAG_PE_2"/>
    <property type="match status" value="2"/>
</dbReference>
<sequence>MSFSQLEQNIKKKIAVEENIIRGASALKKKTSNVMVIQKCNTNIREARQNLEYLEDSLKKLRLKTAQQSQGENGSEDNERCNSKEYGFLSTKSPNEHIFSRLDLVKYDCPSLAQRIQYMLQQLEFKLQVEKQYQEANTKLTKLYQIDGDQRSSSAAEGGAMESKYRIQMLNKALKKYQAINVDFDQFKHQPNDIMDNQQPKFRRKQLTGVLTIGITAARDVDHIQSPMFARKPESYVTIKIDDTIKARTKPSRNDRWSEDFQIPVEKGNEIEITVYDKVNDSLIPVAIMWLLLSDIAEEIRKKKAGQTNEQQGWVNASNINGGSSLASEEGSTLTSTYSNSAIQSTSAKNVQGENTSTSQISTNSWFVLEPSGQILLTLGFHKSSQIERKQLMGGLHRHGAIINRKEEIFEQHGHHFVQKSFYNIMCCAYCGDFLRYTGFQCQDCKFLCHKKCYTNVVTKCIAKTSTDTDPDEAKLNHRIPHRFLPTSNRGTKWCCHCGYILPWGRHKVRKCSECGIMCHAQCAHLVPDFCGMSMEMANKILKTIQDTKRNQEKKKRTVPSAQLGSSIGTANGSDLSPSKLAERANAPLPPQPRKHDKTPSPQKVGRDSPTKQHDPIIDKRISLQTHGREKLNKFIDENEAYLNFTEGAQQTAEFSSPEKTLDPTSNRRSLGLTDLSIEHSQTWESKDDLMRDELELWKAQREEMELEIKQDSGEIQEDLEVDHIDLETKQKLDWENKNDFREADLTIDSTHTNPFRDMNSETFQIEQDHASKEVLQETVSLAPTSTHASRTTDQQSPQKSQTSTSAKHKKRAAKRRKVSLDNFVLLKVLGKGNFGKVILSKSKNTDRLCAIKVLKKDNIIQNHDIESARAEKKVFLLATKTKHPFLTNLYCSFQTENRIYFAMEFIGGGDLMWHVQNQRLSVRRAKFYAAEVLLALKYFHDNGVIYRDLKLENILLTPEGHIKIADYGLCKDEMWYGNRTSTFCGTPEFMAPEILKEQEYTKAVDWWAFGVLLYQMLLCQSPFSGDDEDEVFNAILTDEPLYPIDMAGEIVQIFQGLLTKDPEKRLGAGPRDADEVMEEPFFRNINFDDILNLRVKPPYIPEIKSPEDTSYFEQEFTSAPPTLTPLPSVLTTSQQEEFRGFSFMPDDLDL</sequence>
<gene>
    <name type="primary">PKC1</name>
    <name type="synonym">HPO2</name>
    <name type="synonym">STT1</name>
    <name type="ordered locus">YBL105C</name>
    <name type="ORF">YBL0807</name>
</gene>
<reference key="1">
    <citation type="journal article" date="1990" name="Cell">
        <title>A candidate protein kinase C gene, PKC1, is required for the S. cerevisiae cell cycle.</title>
        <authorList>
            <person name="Levin D.E."/>
            <person name="Fields F.O."/>
            <person name="Kunisawa R."/>
            <person name="Bishop J.M."/>
            <person name="Thorner J."/>
        </authorList>
    </citation>
    <scope>NUCLEOTIDE SEQUENCE [MRNA]</scope>
    <source>
        <strain>ATCC 204278 / EG123 / SM1058</strain>
    </source>
</reference>
<reference key="2">
    <citation type="journal article" date="1995" name="Yeast">
        <title>Sequence analysis of a 78.6 kb segment of the left end of Saccharomyces cerevisiae chromosome II.</title>
        <authorList>
            <person name="Obermaier B."/>
            <person name="Gassenhuber J."/>
            <person name="Piravandi E."/>
            <person name="Domdey H."/>
        </authorList>
    </citation>
    <scope>NUCLEOTIDE SEQUENCE [GENOMIC DNA]</scope>
    <source>
        <strain>ATCC 204508 / S288c</strain>
    </source>
</reference>
<reference key="3">
    <citation type="journal article" date="1994" name="EMBO J.">
        <title>Complete DNA sequence of yeast chromosome II.</title>
        <authorList>
            <person name="Feldmann H."/>
            <person name="Aigle M."/>
            <person name="Aljinovic G."/>
            <person name="Andre B."/>
            <person name="Baclet M.C."/>
            <person name="Barthe C."/>
            <person name="Baur A."/>
            <person name="Becam A.-M."/>
            <person name="Biteau N."/>
            <person name="Boles E."/>
            <person name="Brandt T."/>
            <person name="Brendel M."/>
            <person name="Brueckner M."/>
            <person name="Bussereau F."/>
            <person name="Christiansen C."/>
            <person name="Contreras R."/>
            <person name="Crouzet M."/>
            <person name="Cziepluch C."/>
            <person name="Demolis N."/>
            <person name="Delaveau T."/>
            <person name="Doignon F."/>
            <person name="Domdey H."/>
            <person name="Duesterhus S."/>
            <person name="Dubois E."/>
            <person name="Dujon B."/>
            <person name="El Bakkoury M."/>
            <person name="Entian K.-D."/>
            <person name="Feuermann M."/>
            <person name="Fiers W."/>
            <person name="Fobo G.M."/>
            <person name="Fritz C."/>
            <person name="Gassenhuber J."/>
            <person name="Glansdorff N."/>
            <person name="Goffeau A."/>
            <person name="Grivell L.A."/>
            <person name="de Haan M."/>
            <person name="Hein C."/>
            <person name="Herbert C.J."/>
            <person name="Hollenberg C.P."/>
            <person name="Holmstroem K."/>
            <person name="Jacq C."/>
            <person name="Jacquet M."/>
            <person name="Jauniaux J.-C."/>
            <person name="Jonniaux J.-L."/>
            <person name="Kallesoee T."/>
            <person name="Kiesau P."/>
            <person name="Kirchrath L."/>
            <person name="Koetter P."/>
            <person name="Korol S."/>
            <person name="Liebl S."/>
            <person name="Logghe M."/>
            <person name="Lohan A.J.E."/>
            <person name="Louis E.J."/>
            <person name="Li Z.Y."/>
            <person name="Maat M.J."/>
            <person name="Mallet L."/>
            <person name="Mannhaupt G."/>
            <person name="Messenguy F."/>
            <person name="Miosga T."/>
            <person name="Molemans F."/>
            <person name="Mueller S."/>
            <person name="Nasr F."/>
            <person name="Obermaier B."/>
            <person name="Perea J."/>
            <person name="Pierard A."/>
            <person name="Piravandi E."/>
            <person name="Pohl F.M."/>
            <person name="Pohl T.M."/>
            <person name="Potier S."/>
            <person name="Proft M."/>
            <person name="Purnelle B."/>
            <person name="Ramezani Rad M."/>
            <person name="Rieger M."/>
            <person name="Rose M."/>
            <person name="Schaaff-Gerstenschlaeger I."/>
            <person name="Scherens B."/>
            <person name="Schwarzlose C."/>
            <person name="Skala J."/>
            <person name="Slonimski P.P."/>
            <person name="Smits P.H.M."/>
            <person name="Souciet J.-L."/>
            <person name="Steensma H.Y."/>
            <person name="Stucka R."/>
            <person name="Urrestarazu L.A."/>
            <person name="van der Aart Q.J.M."/>
            <person name="Van Dyck L."/>
            <person name="Vassarotti A."/>
            <person name="Vetter I."/>
            <person name="Vierendeels F."/>
            <person name="Vissers S."/>
            <person name="Wagner G."/>
            <person name="de Wergifosse P."/>
            <person name="Wolfe K.H."/>
            <person name="Zagulski M."/>
            <person name="Zimmermann F.K."/>
            <person name="Mewes H.-W."/>
            <person name="Kleine K."/>
        </authorList>
    </citation>
    <scope>NUCLEOTIDE SEQUENCE [LARGE SCALE GENOMIC DNA]</scope>
    <source>
        <strain>ATCC 204508 / S288c</strain>
    </source>
</reference>
<reference key="4">
    <citation type="journal article" date="2014" name="G3 (Bethesda)">
        <title>The reference genome sequence of Saccharomyces cerevisiae: Then and now.</title>
        <authorList>
            <person name="Engel S.R."/>
            <person name="Dietrich F.S."/>
            <person name="Fisk D.G."/>
            <person name="Binkley G."/>
            <person name="Balakrishnan R."/>
            <person name="Costanzo M.C."/>
            <person name="Dwight S.S."/>
            <person name="Hitz B.C."/>
            <person name="Karra K."/>
            <person name="Nash R.S."/>
            <person name="Weng S."/>
            <person name="Wong E.D."/>
            <person name="Lloyd P."/>
            <person name="Skrzypek M.S."/>
            <person name="Miyasato S.R."/>
            <person name="Simison M."/>
            <person name="Cherry J.M."/>
        </authorList>
    </citation>
    <scope>GENOME REANNOTATION</scope>
    <scope>SEQUENCE REVISION TO 81; 621 AND 789</scope>
    <source>
        <strain>ATCC 204508 / S288c</strain>
    </source>
</reference>
<reference key="5">
    <citation type="journal article" date="2008" name="Mol. Cell. Proteomics">
        <title>A multidimensional chromatography technology for in-depth phosphoproteome analysis.</title>
        <authorList>
            <person name="Albuquerque C.P."/>
            <person name="Smolka M.B."/>
            <person name="Payne S.H."/>
            <person name="Bafna V."/>
            <person name="Eng J."/>
            <person name="Zhou H."/>
        </authorList>
    </citation>
    <scope>PHOSPHORYLATION [LARGE SCALE ANALYSIS] AT SER-226 AND SER-761</scope>
    <scope>IDENTIFICATION BY MASS SPECTROMETRY [LARGE SCALE ANALYSIS]</scope>
</reference>
<reference key="6">
    <citation type="journal article" date="2009" name="Science">
        <title>Global analysis of Cdk1 substrate phosphorylation sites provides insights into evolution.</title>
        <authorList>
            <person name="Holt L.J."/>
            <person name="Tuch B.B."/>
            <person name="Villen J."/>
            <person name="Johnson A.D."/>
            <person name="Gygi S.P."/>
            <person name="Morgan D.O."/>
        </authorList>
    </citation>
    <scope>IDENTIFICATION BY MASS SPECTROMETRY [LARGE SCALE ANALYSIS]</scope>
</reference>
<reference key="7">
    <citation type="journal article" date="1997" name="Yeast">
        <title>Saccharomyces cerevisiae cell lysis mutations cly5 and cly7 define temperature-sensitive alleles of PKC1, the gene encoding yeast protein kinase C.</title>
        <authorList>
            <person name="Baymiller J."/>
            <person name="McCullough J.E."/>
        </authorList>
    </citation>
    <scope>VARIANTS CLY5 AND CLY7</scope>
</reference>
<proteinExistence type="evidence at protein level"/>
<name>KPC1_YEAST</name>
<evidence type="ECO:0000255" key="1">
    <source>
        <dbReference type="PROSITE-ProRule" id="PRU00041"/>
    </source>
</evidence>
<evidence type="ECO:0000255" key="2">
    <source>
        <dbReference type="PROSITE-ProRule" id="PRU00159"/>
    </source>
</evidence>
<evidence type="ECO:0000255" key="3">
    <source>
        <dbReference type="PROSITE-ProRule" id="PRU00226"/>
    </source>
</evidence>
<evidence type="ECO:0000255" key="4">
    <source>
        <dbReference type="PROSITE-ProRule" id="PRU00618"/>
    </source>
</evidence>
<evidence type="ECO:0000255" key="5">
    <source>
        <dbReference type="PROSITE-ProRule" id="PRU01207"/>
    </source>
</evidence>
<evidence type="ECO:0000255" key="6">
    <source>
        <dbReference type="PROSITE-ProRule" id="PRU10027"/>
    </source>
</evidence>
<evidence type="ECO:0000256" key="7">
    <source>
        <dbReference type="SAM" id="MobiDB-lite"/>
    </source>
</evidence>
<evidence type="ECO:0000305" key="8"/>
<evidence type="ECO:0007744" key="9">
    <source>
    </source>
</evidence>
<keyword id="KW-0067">ATP-binding</keyword>
<keyword id="KW-0106">Calcium</keyword>
<keyword id="KW-0131">Cell cycle</keyword>
<keyword id="KW-0175">Coiled coil</keyword>
<keyword id="KW-0418">Kinase</keyword>
<keyword id="KW-0479">Metal-binding</keyword>
<keyword id="KW-0547">Nucleotide-binding</keyword>
<keyword id="KW-0597">Phosphoprotein</keyword>
<keyword id="KW-1185">Reference proteome</keyword>
<keyword id="KW-0677">Repeat</keyword>
<keyword id="KW-0723">Serine/threonine-protein kinase</keyword>
<keyword id="KW-0808">Transferase</keyword>
<keyword id="KW-0862">Zinc</keyword>
<keyword id="KW-0863">Zinc-finger</keyword>
<comment type="function">
    <text>Required for cell growth and for the G2-&gt;M transition of the cell division cycle. Mediates a protein kinase cascade; it activates BCK1 which itself activates MKK1/MKK2.</text>
</comment>
<comment type="catalytic activity">
    <reaction>
        <text>L-seryl-[protein] + ATP = O-phospho-L-seryl-[protein] + ADP + H(+)</text>
        <dbReference type="Rhea" id="RHEA:17989"/>
        <dbReference type="Rhea" id="RHEA-COMP:9863"/>
        <dbReference type="Rhea" id="RHEA-COMP:11604"/>
        <dbReference type="ChEBI" id="CHEBI:15378"/>
        <dbReference type="ChEBI" id="CHEBI:29999"/>
        <dbReference type="ChEBI" id="CHEBI:30616"/>
        <dbReference type="ChEBI" id="CHEBI:83421"/>
        <dbReference type="ChEBI" id="CHEBI:456216"/>
        <dbReference type="EC" id="2.7.11.13"/>
    </reaction>
</comment>
<comment type="catalytic activity">
    <reaction>
        <text>L-threonyl-[protein] + ATP = O-phospho-L-threonyl-[protein] + ADP + H(+)</text>
        <dbReference type="Rhea" id="RHEA:46608"/>
        <dbReference type="Rhea" id="RHEA-COMP:11060"/>
        <dbReference type="Rhea" id="RHEA-COMP:11605"/>
        <dbReference type="ChEBI" id="CHEBI:15378"/>
        <dbReference type="ChEBI" id="CHEBI:30013"/>
        <dbReference type="ChEBI" id="CHEBI:30616"/>
        <dbReference type="ChEBI" id="CHEBI:61977"/>
        <dbReference type="ChEBI" id="CHEBI:456216"/>
        <dbReference type="EC" id="2.7.11.13"/>
    </reaction>
</comment>
<comment type="interaction">
    <interactant intactId="EBI-9860">
        <id>P24583</id>
    </interactant>
    <interactant intactId="EBI-19352">
        <id>P06786</id>
        <label>TOP2</label>
    </interactant>
    <organismsDiffer>false</organismsDiffer>
    <experiments>2</experiments>
</comment>
<comment type="similarity">
    <text evidence="8">Belongs to the protein kinase superfamily. AGC Ser/Thr protein kinase family. PKC subfamily.</text>
</comment>